<organismHost>
    <name type="scientific">Aves</name>
    <dbReference type="NCBI Taxonomy" id="8782"/>
</organismHost>
<organismHost>
    <name type="scientific">Equus caballus</name>
    <name type="common">Horse</name>
    <dbReference type="NCBI Taxonomy" id="9796"/>
</organismHost>
<organismHost>
    <name type="scientific">Homo sapiens</name>
    <name type="common">Human</name>
    <dbReference type="NCBI Taxonomy" id="9606"/>
</organismHost>
<organismHost>
    <name type="scientific">Phocidae</name>
    <name type="common">true seals</name>
    <dbReference type="NCBI Taxonomy" id="9709"/>
</organismHost>
<dbReference type="EMBL" id="M73519">
    <property type="protein sequence ID" value="AAA43140.1"/>
    <property type="molecule type" value="Genomic_RNA"/>
</dbReference>
<dbReference type="SMR" id="P26107"/>
<dbReference type="GO" id="GO:0042025">
    <property type="term" value="C:host cell nucleus"/>
    <property type="evidence" value="ECO:0007669"/>
    <property type="project" value="UniProtKB-SubCell"/>
</dbReference>
<dbReference type="GO" id="GO:0044423">
    <property type="term" value="C:virion component"/>
    <property type="evidence" value="ECO:0007669"/>
    <property type="project" value="UniProtKB-UniRule"/>
</dbReference>
<dbReference type="GO" id="GO:0003723">
    <property type="term" value="F:RNA binding"/>
    <property type="evidence" value="ECO:0007669"/>
    <property type="project" value="UniProtKB-UniRule"/>
</dbReference>
<dbReference type="GO" id="GO:0003968">
    <property type="term" value="F:RNA-directed RNA polymerase activity"/>
    <property type="evidence" value="ECO:0007669"/>
    <property type="project" value="UniProtKB-UniRule"/>
</dbReference>
<dbReference type="GO" id="GO:0006370">
    <property type="term" value="P:7-methylguanosine mRNA capping"/>
    <property type="evidence" value="ECO:0007669"/>
    <property type="project" value="UniProtKB-UniRule"/>
</dbReference>
<dbReference type="GO" id="GO:0075526">
    <property type="term" value="P:cap snatching"/>
    <property type="evidence" value="ECO:0007669"/>
    <property type="project" value="UniProtKB-UniRule"/>
</dbReference>
<dbReference type="GO" id="GO:0006351">
    <property type="term" value="P:DNA-templated transcription"/>
    <property type="evidence" value="ECO:0007669"/>
    <property type="project" value="UniProtKB-UniRule"/>
</dbReference>
<dbReference type="GO" id="GO:0039657">
    <property type="term" value="P:symbiont-mediated suppression of host gene expression"/>
    <property type="evidence" value="ECO:0007669"/>
    <property type="project" value="UniProtKB-KW"/>
</dbReference>
<dbReference type="GO" id="GO:0039523">
    <property type="term" value="P:symbiont-mediated suppression of host mRNA transcription via inhibition of RNA polymerase II activity"/>
    <property type="evidence" value="ECO:0007669"/>
    <property type="project" value="UniProtKB-UniRule"/>
</dbReference>
<dbReference type="GO" id="GO:0039694">
    <property type="term" value="P:viral RNA genome replication"/>
    <property type="evidence" value="ECO:0007669"/>
    <property type="project" value="InterPro"/>
</dbReference>
<dbReference type="Gene3D" id="3.30.30.90">
    <property type="entry name" value="Polymerase Basic Protein 2, C-terminal domain"/>
    <property type="match status" value="1"/>
</dbReference>
<dbReference type="HAMAP" id="MF_04062">
    <property type="entry name" value="INV_PB2"/>
    <property type="match status" value="1"/>
</dbReference>
<dbReference type="InterPro" id="IPR049110">
    <property type="entry name" value="Flu_PB2_2nd"/>
</dbReference>
<dbReference type="InterPro" id="IPR049114">
    <property type="entry name" value="Flu_PB2_6th"/>
</dbReference>
<dbReference type="InterPro" id="IPR049115">
    <property type="entry name" value="Flu_PB2_C"/>
</dbReference>
<dbReference type="InterPro" id="IPR048298">
    <property type="entry name" value="Flu_PB2_CAP-bd"/>
</dbReference>
<dbReference type="InterPro" id="IPR049111">
    <property type="entry name" value="Flu_PB2_middle"/>
</dbReference>
<dbReference type="InterPro" id="IPR049106">
    <property type="entry name" value="Flu_PB2_N"/>
</dbReference>
<dbReference type="InterPro" id="IPR001591">
    <property type="entry name" value="INV_PB2"/>
</dbReference>
<dbReference type="InterPro" id="IPR049113">
    <property type="entry name" value="PB2_helical"/>
</dbReference>
<dbReference type="InterPro" id="IPR037258">
    <property type="entry name" value="PDB2_C"/>
</dbReference>
<dbReference type="Pfam" id="PF20947">
    <property type="entry name" value="Flu_PB2_1st"/>
    <property type="match status" value="1"/>
</dbReference>
<dbReference type="Pfam" id="PF20948">
    <property type="entry name" value="Flu_PB2_2nd"/>
    <property type="match status" value="1"/>
</dbReference>
<dbReference type="Pfam" id="PF20949">
    <property type="entry name" value="Flu_PB2_3rd"/>
    <property type="match status" value="1"/>
</dbReference>
<dbReference type="Pfam" id="PF20950">
    <property type="entry name" value="Flu_PB2_4th"/>
    <property type="match status" value="1"/>
</dbReference>
<dbReference type="Pfam" id="PF00604">
    <property type="entry name" value="Flu_PB2_5th"/>
    <property type="match status" value="1"/>
</dbReference>
<dbReference type="Pfam" id="PF20951">
    <property type="entry name" value="Flu_PB2_6th"/>
    <property type="match status" value="1"/>
</dbReference>
<dbReference type="Pfam" id="PF20952">
    <property type="entry name" value="Flu_PB2_7th"/>
    <property type="match status" value="1"/>
</dbReference>
<dbReference type="SUPFAM" id="SSF160453">
    <property type="entry name" value="PB2 C-terminal domain-like"/>
    <property type="match status" value="1"/>
</dbReference>
<sequence length="759" mass="85836">MERIKELRDLMSQSRTREILTTTTVDHMAIIKRYTSGRQEKNPALRMKWMMAMKYPITADKRIMEMIPERNEQGQTLWSKTNDAGSDRIMVSPLAVTWWNRNGPTAVTTHYPKVYKTYFEKVERLKNGTFGPVHFRNQIKIRRRVDTNPGHADLSAKEAQDVIMEVVFPNEVGAQLLTSESQLKITQEKKEELQDCKIAPLMVAYMLERELVRKTRFLPVAGGTSSVYIEVLHLTQGTCWEQMYAPGGEVRNDDIDQSLIIAARNIVRRATVSTDPLASLLEMCHSTQIGGIRMVDILKQNPTEEQAVDICKAAMGLKISSSFSFGGFTFKRTSGTSVRREEEILTGNLQTLKIQIHEGYEEFTIVGKRATAILRKATQRLVQLIISGKDEQSIAEAIIVAMVFSQEDCMIKAVRGDLNFMNRANQRLNPMHQLLRHFQKDAKILFQNWGIEPIDNIMGMTGILPDMTPSTEMSLRGIRISKTGVDEYSSTERIVVSIDRFLRVRDQRGNVLLSPEEVSETQGTEKLTITYSSSMMWEINGPESILVNTYQWIIKNWETVKIQWSQDPTILYNKIEFEPFQSLIPKAARAQYSGFVRTLFQQMRDVLGTFDTVQIIKLLPFAAAPPEQSRIQFSSLTVNVRGSGMRILIRGNSPVFNYNKTTKRLTVLGKDAGALMNDPDEGTTGIESAVLRGFLILGKENKRYGPALSISELGNLAKGEKANVLIGQGDVVLVMKRKRDSSILTDSQTATKRIRMATN</sequence>
<protein>
    <recommendedName>
        <fullName evidence="1">Polymerase basic protein 2</fullName>
    </recommendedName>
    <alternativeName>
        <fullName evidence="1">RNA-directed RNA polymerase subunit P3</fullName>
    </alternativeName>
</protein>
<accession>P26107</accession>
<comment type="function">
    <text evidence="1">Plays an essential role in transcription initiation and cap-stealing mechanism, in which cellular capped pre-mRNAs are used to generate primers for viral transcription. Recognizes and binds the 7-methylguanosine-containing cap of the target pre-RNA which is subsequently cleaved after 10-13 nucleotides by the viral protein PA. Plays a role in the initiation of the viral genome replication and modulates the activity of the ribonucleoprotein (RNP) complex.</text>
</comment>
<comment type="subunit">
    <text evidence="1">Influenza RNA polymerase is composed of three subunits: PB1, PB2 and PA. Interacts (via N-terminus) with PB1 (via C-terminus). Interacts with nucleoprotein NP (via N-terminus).</text>
</comment>
<comment type="subcellular location">
    <subcellularLocation>
        <location evidence="1">Virion</location>
    </subcellularLocation>
    <subcellularLocation>
        <location evidence="1">Host nucleus</location>
    </subcellularLocation>
</comment>
<comment type="similarity">
    <text evidence="1">Belongs to the influenza viruses PB2 family.</text>
</comment>
<proteinExistence type="inferred from homology"/>
<evidence type="ECO:0000255" key="1">
    <source>
        <dbReference type="HAMAP-Rule" id="MF_04062"/>
    </source>
</evidence>
<reference key="1">
    <citation type="journal article" date="1990" name="J. Virol.">
        <title>Evolution of influenza A virus PB2 genes: implications for evolution of the ribonucleoprotein complex and origin of human influenza A virus.</title>
        <authorList>
            <person name="Gorman O.T."/>
            <person name="Donis R.O."/>
            <person name="Kawaoka Y."/>
            <person name="Webster R.G."/>
        </authorList>
    </citation>
    <scope>NUCLEOTIDE SEQUENCE [GENOMIC RNA]</scope>
</reference>
<name>PB2_I56A3</name>
<gene>
    <name evidence="1" type="primary">PB2</name>
</gene>
<keyword id="KW-1157">Cap snatching</keyword>
<keyword id="KW-1262">Eukaryotic host gene expression shutoff by virus</keyword>
<keyword id="KW-1191">Eukaryotic host transcription shutoff by virus</keyword>
<keyword id="KW-1190">Host gene expression shutoff by virus</keyword>
<keyword id="KW-1048">Host nucleus</keyword>
<keyword id="KW-0945">Host-virus interaction</keyword>
<keyword id="KW-1104">Inhibition of host RNA polymerase II by virus</keyword>
<keyword id="KW-0506">mRNA capping</keyword>
<keyword id="KW-0507">mRNA processing</keyword>
<keyword id="KW-1195">Viral transcription</keyword>
<keyword id="KW-0946">Virion</keyword>
<organism>
    <name type="scientific">Influenza A virus (strain A/Equine/Prague/1/1956 H7N7)</name>
    <dbReference type="NCBI Taxonomy" id="380337"/>
    <lineage>
        <taxon>Viruses</taxon>
        <taxon>Riboviria</taxon>
        <taxon>Orthornavirae</taxon>
        <taxon>Negarnaviricota</taxon>
        <taxon>Polyploviricotina</taxon>
        <taxon>Insthoviricetes</taxon>
        <taxon>Articulavirales</taxon>
        <taxon>Orthomyxoviridae</taxon>
        <taxon>Alphainfluenzavirus</taxon>
        <taxon>Alphainfluenzavirus influenzae</taxon>
        <taxon>Influenza A virus</taxon>
    </lineage>
</organism>
<feature type="chain" id="PRO_0000078824" description="Polymerase basic protein 2">
    <location>
        <begin position="1"/>
        <end position="759"/>
    </location>
</feature>
<feature type="short sequence motif" description="Nuclear localization signal" evidence="1">
    <location>
        <begin position="736"/>
        <end position="739"/>
    </location>
</feature>
<feature type="site" description="Avian adaptation" evidence="1">
    <location>
        <position position="627"/>
    </location>
</feature>